<accession>C0SGL5</accession>
<reference key="1">
    <citation type="journal article" date="2011" name="PLoS Genet.">
        <title>Comparative genomic analysis of human fungal pathogens causing paracoccidioidomycosis.</title>
        <authorList>
            <person name="Desjardins C.A."/>
            <person name="Champion M.D."/>
            <person name="Holder J.W."/>
            <person name="Muszewska A."/>
            <person name="Goldberg J."/>
            <person name="Bailao A.M."/>
            <person name="Brigido M.M."/>
            <person name="Ferreira M.E."/>
            <person name="Garcia A.M."/>
            <person name="Grynberg M."/>
            <person name="Gujja S."/>
            <person name="Heiman D.I."/>
            <person name="Henn M.R."/>
            <person name="Kodira C.D."/>
            <person name="Leon-Narvaez H."/>
            <person name="Longo L.V.G."/>
            <person name="Ma L.-J."/>
            <person name="Malavazi I."/>
            <person name="Matsuo A.L."/>
            <person name="Morais F.V."/>
            <person name="Pereira M."/>
            <person name="Rodriguez-Brito S."/>
            <person name="Sakthikumar S."/>
            <person name="Salem-Izacc S.M."/>
            <person name="Sykes S.M."/>
            <person name="Teixeira M.M."/>
            <person name="Vallejo M.C."/>
            <person name="Walter M.E."/>
            <person name="Yandava C."/>
            <person name="Young S."/>
            <person name="Zeng Q."/>
            <person name="Zucker J."/>
            <person name="Felipe M.S."/>
            <person name="Goldman G.H."/>
            <person name="Haas B.J."/>
            <person name="McEwen J.G."/>
            <person name="Nino-Vega G."/>
            <person name="Puccia R."/>
            <person name="San-Blas G."/>
            <person name="Soares C.M."/>
            <person name="Birren B.W."/>
            <person name="Cuomo C.A."/>
        </authorList>
    </citation>
    <scope>NUCLEOTIDE SEQUENCE [LARGE SCALE GENOMIC DNA]</scope>
    <source>
        <strain>Pb03</strain>
    </source>
</reference>
<feature type="chain" id="PRO_0000384241" description="Maintenance of mitochondrial morphology protein 1">
    <location>
        <begin position="1"/>
        <end position="523"/>
    </location>
</feature>
<feature type="topological domain" description="Lumenal" evidence="1">
    <location>
        <begin position="1"/>
        <end position="43"/>
    </location>
</feature>
<feature type="transmembrane region" description="Helical" evidence="1">
    <location>
        <begin position="44"/>
        <end position="64"/>
    </location>
</feature>
<feature type="topological domain" description="Cytoplasmic" evidence="1">
    <location>
        <begin position="65"/>
        <end position="523"/>
    </location>
</feature>
<feature type="domain" description="SMP-LTD" evidence="1">
    <location>
        <begin position="151"/>
        <end position="412"/>
    </location>
</feature>
<feature type="region of interest" description="Disordered" evidence="2">
    <location>
        <begin position="70"/>
        <end position="118"/>
    </location>
</feature>
<feature type="region of interest" description="Disordered" evidence="2">
    <location>
        <begin position="295"/>
        <end position="349"/>
    </location>
</feature>
<feature type="region of interest" description="Disordered" evidence="2">
    <location>
        <begin position="420"/>
        <end position="473"/>
    </location>
</feature>
<feature type="region of interest" description="Disordered" evidence="2">
    <location>
        <begin position="492"/>
        <end position="523"/>
    </location>
</feature>
<feature type="compositionally biased region" description="Polar residues" evidence="2">
    <location>
        <begin position="74"/>
        <end position="96"/>
    </location>
</feature>
<feature type="compositionally biased region" description="Polar residues" evidence="2">
    <location>
        <begin position="105"/>
        <end position="118"/>
    </location>
</feature>
<feature type="compositionally biased region" description="Polar residues" evidence="2">
    <location>
        <begin position="295"/>
        <end position="312"/>
    </location>
</feature>
<feature type="compositionally biased region" description="Gly residues" evidence="2">
    <location>
        <begin position="449"/>
        <end position="467"/>
    </location>
</feature>
<dbReference type="EMBL" id="KN305544">
    <property type="protein sequence ID" value="EEH16821.1"/>
    <property type="molecule type" value="Genomic_DNA"/>
</dbReference>
<dbReference type="SMR" id="C0SGL5"/>
<dbReference type="VEuPathDB" id="FungiDB:PABG_06908"/>
<dbReference type="HOGENOM" id="CLU_032730_2_0_1"/>
<dbReference type="OrthoDB" id="21185at33183"/>
<dbReference type="GO" id="GO:0005789">
    <property type="term" value="C:endoplasmic reticulum membrane"/>
    <property type="evidence" value="ECO:0007669"/>
    <property type="project" value="UniProtKB-SubCell"/>
</dbReference>
<dbReference type="GO" id="GO:0032865">
    <property type="term" value="C:ERMES complex"/>
    <property type="evidence" value="ECO:0007669"/>
    <property type="project" value="UniProtKB-UniRule"/>
</dbReference>
<dbReference type="GO" id="GO:0008289">
    <property type="term" value="F:lipid binding"/>
    <property type="evidence" value="ECO:0007669"/>
    <property type="project" value="UniProtKB-KW"/>
</dbReference>
<dbReference type="GO" id="GO:0000002">
    <property type="term" value="P:mitochondrial genome maintenance"/>
    <property type="evidence" value="ECO:0007669"/>
    <property type="project" value="UniProtKB-UniRule"/>
</dbReference>
<dbReference type="GO" id="GO:1990456">
    <property type="term" value="P:mitochondrion-endoplasmic reticulum membrane tethering"/>
    <property type="evidence" value="ECO:0007669"/>
    <property type="project" value="TreeGrafter"/>
</dbReference>
<dbReference type="GO" id="GO:0015914">
    <property type="term" value="P:phospholipid transport"/>
    <property type="evidence" value="ECO:0007669"/>
    <property type="project" value="TreeGrafter"/>
</dbReference>
<dbReference type="GO" id="GO:0045040">
    <property type="term" value="P:protein insertion into mitochondrial outer membrane"/>
    <property type="evidence" value="ECO:0007669"/>
    <property type="project" value="UniProtKB-UniRule"/>
</dbReference>
<dbReference type="CDD" id="cd21671">
    <property type="entry name" value="SMP_Mmm1"/>
    <property type="match status" value="1"/>
</dbReference>
<dbReference type="HAMAP" id="MF_03103">
    <property type="entry name" value="Mmm1"/>
    <property type="match status" value="1"/>
</dbReference>
<dbReference type="InterPro" id="IPR027537">
    <property type="entry name" value="Mmm1"/>
</dbReference>
<dbReference type="InterPro" id="IPR019411">
    <property type="entry name" value="MMM1_dom"/>
</dbReference>
<dbReference type="InterPro" id="IPR031468">
    <property type="entry name" value="SMP_LBD"/>
</dbReference>
<dbReference type="PANTHER" id="PTHR13466:SF0">
    <property type="entry name" value="SMP-LTD DOMAIN-CONTAINING PROTEIN"/>
    <property type="match status" value="1"/>
</dbReference>
<dbReference type="PANTHER" id="PTHR13466">
    <property type="entry name" value="TEX2 PROTEIN-RELATED"/>
    <property type="match status" value="1"/>
</dbReference>
<dbReference type="Pfam" id="PF10296">
    <property type="entry name" value="MMM1"/>
    <property type="match status" value="1"/>
</dbReference>
<dbReference type="PROSITE" id="PS51847">
    <property type="entry name" value="SMP"/>
    <property type="match status" value="1"/>
</dbReference>
<proteinExistence type="inferred from homology"/>
<gene>
    <name evidence="1" type="primary">MMM1</name>
    <name type="ORF">PABG_06908</name>
</gene>
<comment type="function">
    <text evidence="1">Component of the ERMES/MDM complex, which serves as a molecular tether to connect the endoplasmic reticulum (ER) and mitochondria. Components of this complex are involved in the control of mitochondrial shape and protein biogenesis, and function in nonvesicular lipid trafficking between the ER and mitochondria. The MDM12-MMM1 subcomplex functions in the major beta-barrel assembly pathway that is responsible for biogenesis of all outer membrane beta-barrel proteins, and acts in a late step after the SAM complex. The MDM10-MDM12-MMM1 subcomplex further acts in the TOM40-specific pathway after the action of the MDM12-MMM1 complex. Essential for establishing and maintaining the structure of mitochondria and maintenance of mtDNA nucleoids.</text>
</comment>
<comment type="subunit">
    <text evidence="1">Homodimer. Component of the ER-mitochondria encounter structure (ERMES) or MDM complex, composed of MMM1, MDM10, MDM12 and MDM34. A MMM1 homodimer associates with one molecule of MDM12 on each side in a pairwise head-to-tail manner, and the SMP-LTD domains of MMM1 and MDM12 generate a continuous hydrophobic tunnel for phospholipid trafficking.</text>
</comment>
<comment type="subcellular location">
    <subcellularLocation>
        <location evidence="1">Endoplasmic reticulum membrane</location>
        <topology evidence="1">Single-pass type I membrane protein</topology>
    </subcellularLocation>
    <text evidence="1">The ERMES/MDM complex localizes to a few discrete foci (around 10 per single cell), that represent mitochondria-endoplasmic reticulum junctions. These foci are often found next to mtDNA nucleoids.</text>
</comment>
<comment type="domain">
    <text evidence="1">The SMP-LTD domain is a barrel-like domain that can bind various types of glycerophospholipids in its interior and mediate their transfer between two adjacent bilayers.</text>
</comment>
<comment type="similarity">
    <text evidence="1">Belongs to the MMM1 family.</text>
</comment>
<protein>
    <recommendedName>
        <fullName evidence="1">Maintenance of mitochondrial morphology protein 1</fullName>
    </recommendedName>
</protein>
<evidence type="ECO:0000255" key="1">
    <source>
        <dbReference type="HAMAP-Rule" id="MF_03103"/>
    </source>
</evidence>
<evidence type="ECO:0000256" key="2">
    <source>
        <dbReference type="SAM" id="MobiDB-lite"/>
    </source>
</evidence>
<sequence length="523" mass="55887">MAGSTSASLQTPYFPSSTQINPVRVDHTLPLPPAQPSLSFTQGLLVGQLSVVLLIGAFIKFFIFGEAPPPPSRGLSNRTSTHPRSYSINAASTDSSPRLLREKPSTSNILRPVPSSSTNTRSILRKTYYSATPTHPTPKHGRPRLYHSSHQPESLDWFNVLIAQTIAQYRQTAYILKDSPTSSILASLSETLNNPEKKPSFIDIIKVTDISLGEEFPIFSNCRVIAVEDPNSDGGRLQALMDVDLSDDNLSLAIETSLLLNYPKPFSAILPVALAVSVVRFSGTLCISFVPGPRTSDQTMSPIPTPHDTTSEAIDDQSSDQSSPAQNPDGPKDAHANTSNTTDASSKHGIPKTSLAFSFLPDYRLDLSVRSLIGSRSRLQDVPKVAQLVEARVQSWFEERVVEPRVQVVGLPNIWPRMGRTGLRSSQEEPEAGSGSVEIPVMTSPGTDGVSGGGGSGGGSGGGGGSMRGIDRGLSGREVGYEALRFRHAACGGHQNQSGRDGGRGGNEQFAMPGSMPDTVTET</sequence>
<name>MMM1_PARBP</name>
<organism>
    <name type="scientific">Paracoccidioides brasiliensis (strain Pb03)</name>
    <dbReference type="NCBI Taxonomy" id="482561"/>
    <lineage>
        <taxon>Eukaryota</taxon>
        <taxon>Fungi</taxon>
        <taxon>Dikarya</taxon>
        <taxon>Ascomycota</taxon>
        <taxon>Pezizomycotina</taxon>
        <taxon>Eurotiomycetes</taxon>
        <taxon>Eurotiomycetidae</taxon>
        <taxon>Onygenales</taxon>
        <taxon>Ajellomycetaceae</taxon>
        <taxon>Paracoccidioides</taxon>
    </lineage>
</organism>
<keyword id="KW-0256">Endoplasmic reticulum</keyword>
<keyword id="KW-0445">Lipid transport</keyword>
<keyword id="KW-0446">Lipid-binding</keyword>
<keyword id="KW-0472">Membrane</keyword>
<keyword id="KW-0812">Transmembrane</keyword>
<keyword id="KW-1133">Transmembrane helix</keyword>
<keyword id="KW-0813">Transport</keyword>